<evidence type="ECO:0000250" key="1"/>
<evidence type="ECO:0000255" key="2"/>
<evidence type="ECO:0000255" key="3">
    <source>
        <dbReference type="PROSITE-ProRule" id="PRU00102"/>
    </source>
</evidence>
<evidence type="ECO:0000255" key="4">
    <source>
        <dbReference type="PROSITE-ProRule" id="PRU00107"/>
    </source>
</evidence>
<comment type="function">
    <text evidence="1">Member of the two-component regulatory system HssS/HssR involved in intracellular heme homeostasis and tempering of staphylococcal virulence. HssS functions as a heme sensor histidine kinase which is autophosphorylated at a histidine residue and transfers its phosphate group to an aspartate residue of HssR. HssR/HssS activates the expression of hrtAB, an efflux pump, in response to extracellular heme, hemin, hemoglobin or blood (By similarity).</text>
</comment>
<comment type="catalytic activity">
    <reaction>
        <text>ATP + protein L-histidine = ADP + protein N-phospho-L-histidine.</text>
        <dbReference type="EC" id="2.7.13.3"/>
    </reaction>
</comment>
<comment type="subcellular location">
    <subcellularLocation>
        <location evidence="1">Cell membrane</location>
        <topology evidence="1">Multi-pass membrane protein</topology>
    </subcellularLocation>
</comment>
<comment type="PTM">
    <text evidence="1">Autophosphorylated.</text>
</comment>
<gene>
    <name type="primary">hssS</name>
    <name type="ordered locus">SAOUHSC_02644</name>
</gene>
<proteinExistence type="inferred from homology"/>
<dbReference type="EC" id="2.7.13.3"/>
<dbReference type="EMBL" id="CP000253">
    <property type="protein sequence ID" value="ABD31652.1"/>
    <property type="molecule type" value="Genomic_DNA"/>
</dbReference>
<dbReference type="RefSeq" id="WP_000477329.1">
    <property type="nucleotide sequence ID" value="NZ_LS483365.1"/>
</dbReference>
<dbReference type="RefSeq" id="YP_501106.1">
    <property type="nucleotide sequence ID" value="NC_007795.1"/>
</dbReference>
<dbReference type="SMR" id="Q2FVQ8"/>
<dbReference type="STRING" id="93061.SAOUHSC_02644"/>
<dbReference type="PaxDb" id="1280-SAXN108_2614"/>
<dbReference type="GeneID" id="3921206"/>
<dbReference type="KEGG" id="sao:SAOUHSC_02644"/>
<dbReference type="PATRIC" id="fig|93061.5.peg.2391"/>
<dbReference type="eggNOG" id="COG3850">
    <property type="taxonomic scope" value="Bacteria"/>
</dbReference>
<dbReference type="eggNOG" id="COG5002">
    <property type="taxonomic scope" value="Bacteria"/>
</dbReference>
<dbReference type="HOGENOM" id="CLU_000445_89_6_9"/>
<dbReference type="OrthoDB" id="9813151at2"/>
<dbReference type="PRO" id="PR:Q2FVQ8"/>
<dbReference type="Proteomes" id="UP000008816">
    <property type="component" value="Chromosome"/>
</dbReference>
<dbReference type="GO" id="GO:0005886">
    <property type="term" value="C:plasma membrane"/>
    <property type="evidence" value="ECO:0007669"/>
    <property type="project" value="UniProtKB-SubCell"/>
</dbReference>
<dbReference type="GO" id="GO:0005524">
    <property type="term" value="F:ATP binding"/>
    <property type="evidence" value="ECO:0007669"/>
    <property type="project" value="UniProtKB-KW"/>
</dbReference>
<dbReference type="GO" id="GO:0000156">
    <property type="term" value="F:phosphorelay response regulator activity"/>
    <property type="evidence" value="ECO:0000318"/>
    <property type="project" value="GO_Central"/>
</dbReference>
<dbReference type="GO" id="GO:0000155">
    <property type="term" value="F:phosphorelay sensor kinase activity"/>
    <property type="evidence" value="ECO:0007669"/>
    <property type="project" value="InterPro"/>
</dbReference>
<dbReference type="GO" id="GO:0030295">
    <property type="term" value="F:protein kinase activator activity"/>
    <property type="evidence" value="ECO:0000318"/>
    <property type="project" value="GO_Central"/>
</dbReference>
<dbReference type="GO" id="GO:0007234">
    <property type="term" value="P:osmosensory signaling via phosphorelay pathway"/>
    <property type="evidence" value="ECO:0000318"/>
    <property type="project" value="GO_Central"/>
</dbReference>
<dbReference type="CDD" id="cd06225">
    <property type="entry name" value="HAMP"/>
    <property type="match status" value="1"/>
</dbReference>
<dbReference type="CDD" id="cd00082">
    <property type="entry name" value="HisKA"/>
    <property type="match status" value="1"/>
</dbReference>
<dbReference type="FunFam" id="3.30.565.10:FF:000006">
    <property type="entry name" value="Sensor histidine kinase WalK"/>
    <property type="match status" value="1"/>
</dbReference>
<dbReference type="Gene3D" id="1.10.287.130">
    <property type="match status" value="1"/>
</dbReference>
<dbReference type="Gene3D" id="6.10.340.10">
    <property type="match status" value="1"/>
</dbReference>
<dbReference type="Gene3D" id="3.30.565.10">
    <property type="entry name" value="Histidine kinase-like ATPase, C-terminal domain"/>
    <property type="match status" value="1"/>
</dbReference>
<dbReference type="InterPro" id="IPR050398">
    <property type="entry name" value="Bact_Sensor_His_Kinase"/>
</dbReference>
<dbReference type="InterPro" id="IPR003660">
    <property type="entry name" value="HAMP_dom"/>
</dbReference>
<dbReference type="InterPro" id="IPR036890">
    <property type="entry name" value="HATPase_C_sf"/>
</dbReference>
<dbReference type="InterPro" id="IPR005467">
    <property type="entry name" value="His_kinase_dom"/>
</dbReference>
<dbReference type="InterPro" id="IPR003661">
    <property type="entry name" value="HisK_dim/P_dom"/>
</dbReference>
<dbReference type="InterPro" id="IPR036097">
    <property type="entry name" value="HisK_dim/P_sf"/>
</dbReference>
<dbReference type="InterPro" id="IPR004358">
    <property type="entry name" value="Sig_transdc_His_kin-like_C"/>
</dbReference>
<dbReference type="PANTHER" id="PTHR45528:SF11">
    <property type="entry name" value="HISTIDINE KINASE"/>
    <property type="match status" value="1"/>
</dbReference>
<dbReference type="PANTHER" id="PTHR45528">
    <property type="entry name" value="SENSOR HISTIDINE KINASE CPXA"/>
    <property type="match status" value="1"/>
</dbReference>
<dbReference type="Pfam" id="PF00672">
    <property type="entry name" value="HAMP"/>
    <property type="match status" value="1"/>
</dbReference>
<dbReference type="Pfam" id="PF02518">
    <property type="entry name" value="HATPase_c"/>
    <property type="match status" value="1"/>
</dbReference>
<dbReference type="Pfam" id="PF00512">
    <property type="entry name" value="HisKA"/>
    <property type="match status" value="1"/>
</dbReference>
<dbReference type="PRINTS" id="PR00344">
    <property type="entry name" value="BCTRLSENSOR"/>
</dbReference>
<dbReference type="SMART" id="SM00304">
    <property type="entry name" value="HAMP"/>
    <property type="match status" value="1"/>
</dbReference>
<dbReference type="SMART" id="SM00387">
    <property type="entry name" value="HATPase_c"/>
    <property type="match status" value="1"/>
</dbReference>
<dbReference type="SMART" id="SM00388">
    <property type="entry name" value="HisKA"/>
    <property type="match status" value="1"/>
</dbReference>
<dbReference type="SUPFAM" id="SSF55874">
    <property type="entry name" value="ATPase domain of HSP90 chaperone/DNA topoisomerase II/histidine kinase"/>
    <property type="match status" value="1"/>
</dbReference>
<dbReference type="SUPFAM" id="SSF158472">
    <property type="entry name" value="HAMP domain-like"/>
    <property type="match status" value="1"/>
</dbReference>
<dbReference type="SUPFAM" id="SSF47384">
    <property type="entry name" value="Homodimeric domain of signal transducing histidine kinase"/>
    <property type="match status" value="1"/>
</dbReference>
<dbReference type="PROSITE" id="PS50885">
    <property type="entry name" value="HAMP"/>
    <property type="match status" value="1"/>
</dbReference>
<dbReference type="PROSITE" id="PS50109">
    <property type="entry name" value="HIS_KIN"/>
    <property type="match status" value="1"/>
</dbReference>
<accession>Q2FVQ8</accession>
<reference key="1">
    <citation type="book" date="2006" name="Gram positive pathogens, 2nd edition">
        <title>The Staphylococcus aureus NCTC 8325 genome.</title>
        <editorList>
            <person name="Fischetti V."/>
            <person name="Novick R."/>
            <person name="Ferretti J."/>
            <person name="Portnoy D."/>
            <person name="Rood J."/>
        </editorList>
        <authorList>
            <person name="Gillaspy A.F."/>
            <person name="Worrell V."/>
            <person name="Orvis J."/>
            <person name="Roe B.A."/>
            <person name="Dyer D.W."/>
            <person name="Iandolo J.J."/>
        </authorList>
    </citation>
    <scope>NUCLEOTIDE SEQUENCE [LARGE SCALE GENOMIC DNA]</scope>
    <source>
        <strain>NCTC 8325 / PS 47</strain>
    </source>
</reference>
<name>HSSS_STAA8</name>
<keyword id="KW-0067">ATP-binding</keyword>
<keyword id="KW-1003">Cell membrane</keyword>
<keyword id="KW-0418">Kinase</keyword>
<keyword id="KW-0472">Membrane</keyword>
<keyword id="KW-0547">Nucleotide-binding</keyword>
<keyword id="KW-0597">Phosphoprotein</keyword>
<keyword id="KW-1185">Reference proteome</keyword>
<keyword id="KW-0808">Transferase</keyword>
<keyword id="KW-0812">Transmembrane</keyword>
<keyword id="KW-1133">Transmembrane helix</keyword>
<keyword id="KW-0902">Two-component regulatory system</keyword>
<keyword id="KW-0843">Virulence</keyword>
<feature type="chain" id="PRO_0000331347" description="Heme sensor protein HssS">
    <location>
        <begin position="1"/>
        <end position="457"/>
    </location>
</feature>
<feature type="transmembrane region" description="Helical" evidence="2">
    <location>
        <begin position="9"/>
        <end position="29"/>
    </location>
</feature>
<feature type="transmembrane region" description="Helical" evidence="2">
    <location>
        <begin position="164"/>
        <end position="184"/>
    </location>
</feature>
<feature type="domain" description="HAMP" evidence="3">
    <location>
        <begin position="186"/>
        <end position="238"/>
    </location>
</feature>
<feature type="domain" description="Histidine kinase" evidence="4">
    <location>
        <begin position="246"/>
        <end position="456"/>
    </location>
</feature>
<feature type="modified residue" description="Phosphohistidine; by autocatalysis" evidence="4">
    <location>
        <position position="249"/>
    </location>
</feature>
<protein>
    <recommendedName>
        <fullName>Heme sensor protein HssS</fullName>
        <ecNumber>2.7.13.3</ecNumber>
    </recommendedName>
</protein>
<organism>
    <name type="scientific">Staphylococcus aureus (strain NCTC 8325 / PS 47)</name>
    <dbReference type="NCBI Taxonomy" id="93061"/>
    <lineage>
        <taxon>Bacteria</taxon>
        <taxon>Bacillati</taxon>
        <taxon>Bacillota</taxon>
        <taxon>Bacilli</taxon>
        <taxon>Bacillales</taxon>
        <taxon>Staphylococcaceae</taxon>
        <taxon>Staphylococcus</taxon>
    </lineage>
</organism>
<sequence>MFKTLYARIAIYSITVILFSALISFVLTNVYYHYNLKASNDAKIMKTLKEARQYEQSAKPTHIQQYFKHLGQMNYQIMTIDQKGHKTFYGEPFREDTLSQNAINNVLNNQDYHGIKDKPFALFVTGFFDNVTDNTVGINFKTKDGSIAVFMRPDIGETFSEFRTFLAVLLMLLLFISISLVIASTYSIIRPVKKLKLATERLIDGDFETPIKQTRKDEIGTLQYHFNKMRESLGQVDQMRQHFVQNVSHEIKTPLTHIHHLLSELQQTSDKTLRQQYINDIYTITTQLSGLTTELLLLSELDNHQHLLFDDKIQVNQLIKDIIRHEQFAADEKSLIILADLESINFLGNQRLLHQALSNLLINAIKYTDVGGAIDIALQHSHNNIIFTISNDGSPISPQAEARLFERFYKVSKHDNSNGLGLAITKSIIELHHGTIQFTQSNEYVTTFTITLPNNSL</sequence>